<name>YBEY_SPICI</name>
<keyword id="KW-0963">Cytoplasm</keyword>
<keyword id="KW-0255">Endonuclease</keyword>
<keyword id="KW-0378">Hydrolase</keyword>
<keyword id="KW-0479">Metal-binding</keyword>
<keyword id="KW-0540">Nuclease</keyword>
<keyword id="KW-0690">Ribosome biogenesis</keyword>
<keyword id="KW-0698">rRNA processing</keyword>
<keyword id="KW-0862">Zinc</keyword>
<proteinExistence type="inferred from homology"/>
<dbReference type="EC" id="3.1.-.-" evidence="1"/>
<dbReference type="EMBL" id="AM285305">
    <property type="protein sequence ID" value="CAK98812.1"/>
    <property type="molecule type" value="Genomic_DNA"/>
</dbReference>
<dbReference type="RefSeq" id="WP_071937666.1">
    <property type="nucleotide sequence ID" value="NZ_CP013197.1"/>
</dbReference>
<dbReference type="SMR" id="Q14NW7"/>
<dbReference type="STRING" id="2133.SCITRI_001325"/>
<dbReference type="GeneID" id="54239180"/>
<dbReference type="OrthoDB" id="9807740at2"/>
<dbReference type="GO" id="GO:0005737">
    <property type="term" value="C:cytoplasm"/>
    <property type="evidence" value="ECO:0007669"/>
    <property type="project" value="UniProtKB-SubCell"/>
</dbReference>
<dbReference type="GO" id="GO:0004222">
    <property type="term" value="F:metalloendopeptidase activity"/>
    <property type="evidence" value="ECO:0007669"/>
    <property type="project" value="InterPro"/>
</dbReference>
<dbReference type="GO" id="GO:0004521">
    <property type="term" value="F:RNA endonuclease activity"/>
    <property type="evidence" value="ECO:0007669"/>
    <property type="project" value="UniProtKB-UniRule"/>
</dbReference>
<dbReference type="GO" id="GO:0008270">
    <property type="term" value="F:zinc ion binding"/>
    <property type="evidence" value="ECO:0007669"/>
    <property type="project" value="UniProtKB-UniRule"/>
</dbReference>
<dbReference type="GO" id="GO:0006364">
    <property type="term" value="P:rRNA processing"/>
    <property type="evidence" value="ECO:0007669"/>
    <property type="project" value="UniProtKB-UniRule"/>
</dbReference>
<dbReference type="Gene3D" id="3.40.390.30">
    <property type="entry name" value="Metalloproteases ('zincins'), catalytic domain"/>
    <property type="match status" value="1"/>
</dbReference>
<dbReference type="HAMAP" id="MF_00009">
    <property type="entry name" value="Endoribonucl_YbeY"/>
    <property type="match status" value="1"/>
</dbReference>
<dbReference type="InterPro" id="IPR023091">
    <property type="entry name" value="MetalPrtase_cat_dom_sf_prd"/>
</dbReference>
<dbReference type="InterPro" id="IPR002036">
    <property type="entry name" value="YbeY"/>
</dbReference>
<dbReference type="InterPro" id="IPR020549">
    <property type="entry name" value="YbeY_CS"/>
</dbReference>
<dbReference type="NCBIfam" id="TIGR00043">
    <property type="entry name" value="rRNA maturation RNase YbeY"/>
    <property type="match status" value="1"/>
</dbReference>
<dbReference type="PANTHER" id="PTHR46986">
    <property type="entry name" value="ENDORIBONUCLEASE YBEY, CHLOROPLASTIC"/>
    <property type="match status" value="1"/>
</dbReference>
<dbReference type="PANTHER" id="PTHR46986:SF1">
    <property type="entry name" value="ENDORIBONUCLEASE YBEY, CHLOROPLASTIC"/>
    <property type="match status" value="1"/>
</dbReference>
<dbReference type="Pfam" id="PF02130">
    <property type="entry name" value="YbeY"/>
    <property type="match status" value="1"/>
</dbReference>
<dbReference type="SUPFAM" id="SSF55486">
    <property type="entry name" value="Metalloproteases ('zincins'), catalytic domain"/>
    <property type="match status" value="1"/>
</dbReference>
<dbReference type="PROSITE" id="PS01306">
    <property type="entry name" value="UPF0054"/>
    <property type="match status" value="1"/>
</dbReference>
<protein>
    <recommendedName>
        <fullName evidence="1">Endoribonuclease YbeY</fullName>
        <ecNumber evidence="1">3.1.-.-</ecNumber>
    </recommendedName>
</protein>
<sequence length="158" mass="18649">MKDDFVIYNETDFYIKPYQDDFNAIFQKIKTLLAITEPLELSLIIVDAQEQLELNQKYRHKDYVADVITFALEEENKIDLFELTGLRSLGDIFICYEKALAQAAEYNHSPRREFAFLFTHGMLHILGYDHQTPADEEKMFNLQRKVLNDLQINRIPIK</sequence>
<comment type="function">
    <text evidence="1">Single strand-specific metallo-endoribonuclease involved in late-stage 70S ribosome quality control and in maturation of the 3' terminus of the 16S rRNA.</text>
</comment>
<comment type="cofactor">
    <cofactor evidence="1">
        <name>Zn(2+)</name>
        <dbReference type="ChEBI" id="CHEBI:29105"/>
    </cofactor>
    <text evidence="1">Binds 1 zinc ion.</text>
</comment>
<comment type="subcellular location">
    <subcellularLocation>
        <location evidence="1">Cytoplasm</location>
    </subcellularLocation>
</comment>
<comment type="similarity">
    <text evidence="1">Belongs to the endoribonuclease YbeY family.</text>
</comment>
<accession>Q14NW7</accession>
<gene>
    <name evidence="1" type="primary">ybeY</name>
    <name type="ORF">SPICI04_020</name>
</gene>
<reference key="1">
    <citation type="submission" date="2006-06" db="EMBL/GenBank/DDBJ databases">
        <title>The partial chromosome sequence of Spiroplasma citri GII3-3X.</title>
        <authorList>
            <person name="Carle P."/>
            <person name="Saillard C."/>
            <person name="Blanchard A."/>
            <person name="Carrere N."/>
            <person name="Carrere S."/>
            <person name="Duret S."/>
            <person name="Eveillard S."/>
            <person name="Gaurivaud P."/>
            <person name="Gourgues G."/>
            <person name="Gouzy J."/>
            <person name="Henry A."/>
            <person name="Salar P."/>
            <person name="Laigret F."/>
            <person name="Bove J.M."/>
            <person name="Renaudin J."/>
            <person name="Foissac X."/>
        </authorList>
    </citation>
    <scope>NUCLEOTIDE SEQUENCE [GENOMIC DNA]</scope>
    <source>
        <strain>GII-3-3X</strain>
    </source>
</reference>
<feature type="chain" id="PRO_0000284318" description="Endoribonuclease YbeY">
    <location>
        <begin position="1"/>
        <end position="158"/>
    </location>
</feature>
<feature type="binding site" evidence="1">
    <location>
        <position position="120"/>
    </location>
    <ligand>
        <name>Zn(2+)</name>
        <dbReference type="ChEBI" id="CHEBI:29105"/>
        <note>catalytic</note>
    </ligand>
</feature>
<feature type="binding site" evidence="1">
    <location>
        <position position="124"/>
    </location>
    <ligand>
        <name>Zn(2+)</name>
        <dbReference type="ChEBI" id="CHEBI:29105"/>
        <note>catalytic</note>
    </ligand>
</feature>
<feature type="binding site" evidence="1">
    <location>
        <position position="130"/>
    </location>
    <ligand>
        <name>Zn(2+)</name>
        <dbReference type="ChEBI" id="CHEBI:29105"/>
        <note>catalytic</note>
    </ligand>
</feature>
<organism>
    <name type="scientific">Spiroplasma citri</name>
    <dbReference type="NCBI Taxonomy" id="2133"/>
    <lineage>
        <taxon>Bacteria</taxon>
        <taxon>Bacillati</taxon>
        <taxon>Mycoplasmatota</taxon>
        <taxon>Mollicutes</taxon>
        <taxon>Entomoplasmatales</taxon>
        <taxon>Spiroplasmataceae</taxon>
        <taxon>Spiroplasma</taxon>
    </lineage>
</organism>
<evidence type="ECO:0000255" key="1">
    <source>
        <dbReference type="HAMAP-Rule" id="MF_00009"/>
    </source>
</evidence>